<gene>
    <name evidence="1" type="primary">rpmC</name>
    <name type="ordered locus">Dhaf_0430</name>
</gene>
<comment type="similarity">
    <text evidence="1">Belongs to the universal ribosomal protein uL29 family.</text>
</comment>
<dbReference type="EMBL" id="CP001336">
    <property type="protein sequence ID" value="ACL18497.1"/>
    <property type="molecule type" value="Genomic_DNA"/>
</dbReference>
<dbReference type="RefSeq" id="WP_015942761.1">
    <property type="nucleotide sequence ID" value="NC_011830.1"/>
</dbReference>
<dbReference type="SMR" id="B8G1X4"/>
<dbReference type="KEGG" id="dhd:Dhaf_0430"/>
<dbReference type="HOGENOM" id="CLU_158491_5_2_9"/>
<dbReference type="Proteomes" id="UP000007726">
    <property type="component" value="Chromosome"/>
</dbReference>
<dbReference type="GO" id="GO:0022625">
    <property type="term" value="C:cytosolic large ribosomal subunit"/>
    <property type="evidence" value="ECO:0007669"/>
    <property type="project" value="TreeGrafter"/>
</dbReference>
<dbReference type="GO" id="GO:0003735">
    <property type="term" value="F:structural constituent of ribosome"/>
    <property type="evidence" value="ECO:0007669"/>
    <property type="project" value="InterPro"/>
</dbReference>
<dbReference type="GO" id="GO:0006412">
    <property type="term" value="P:translation"/>
    <property type="evidence" value="ECO:0007669"/>
    <property type="project" value="UniProtKB-UniRule"/>
</dbReference>
<dbReference type="CDD" id="cd00427">
    <property type="entry name" value="Ribosomal_L29_HIP"/>
    <property type="match status" value="1"/>
</dbReference>
<dbReference type="FunFam" id="1.10.287.310:FF:000001">
    <property type="entry name" value="50S ribosomal protein L29"/>
    <property type="match status" value="1"/>
</dbReference>
<dbReference type="Gene3D" id="1.10.287.310">
    <property type="match status" value="1"/>
</dbReference>
<dbReference type="HAMAP" id="MF_00374">
    <property type="entry name" value="Ribosomal_uL29"/>
    <property type="match status" value="1"/>
</dbReference>
<dbReference type="InterPro" id="IPR050063">
    <property type="entry name" value="Ribosomal_protein_uL29"/>
</dbReference>
<dbReference type="InterPro" id="IPR001854">
    <property type="entry name" value="Ribosomal_uL29"/>
</dbReference>
<dbReference type="InterPro" id="IPR036049">
    <property type="entry name" value="Ribosomal_uL29_sf"/>
</dbReference>
<dbReference type="NCBIfam" id="TIGR00012">
    <property type="entry name" value="L29"/>
    <property type="match status" value="1"/>
</dbReference>
<dbReference type="PANTHER" id="PTHR10916">
    <property type="entry name" value="60S RIBOSOMAL PROTEIN L35/50S RIBOSOMAL PROTEIN L29"/>
    <property type="match status" value="1"/>
</dbReference>
<dbReference type="PANTHER" id="PTHR10916:SF0">
    <property type="entry name" value="LARGE RIBOSOMAL SUBUNIT PROTEIN UL29C"/>
    <property type="match status" value="1"/>
</dbReference>
<dbReference type="Pfam" id="PF00831">
    <property type="entry name" value="Ribosomal_L29"/>
    <property type="match status" value="1"/>
</dbReference>
<dbReference type="SUPFAM" id="SSF46561">
    <property type="entry name" value="Ribosomal protein L29 (L29p)"/>
    <property type="match status" value="1"/>
</dbReference>
<proteinExistence type="inferred from homology"/>
<feature type="chain" id="PRO_1000194012" description="Large ribosomal subunit protein uL29">
    <location>
        <begin position="1"/>
        <end position="67"/>
    </location>
</feature>
<accession>B8G1X4</accession>
<evidence type="ECO:0000255" key="1">
    <source>
        <dbReference type="HAMAP-Rule" id="MF_00374"/>
    </source>
</evidence>
<evidence type="ECO:0000305" key="2"/>
<protein>
    <recommendedName>
        <fullName evidence="1">Large ribosomal subunit protein uL29</fullName>
    </recommendedName>
    <alternativeName>
        <fullName evidence="2">50S ribosomal protein L29</fullName>
    </alternativeName>
</protein>
<organism>
    <name type="scientific">Desulfitobacterium hafniense (strain DSM 10664 / DCB-2)</name>
    <dbReference type="NCBI Taxonomy" id="272564"/>
    <lineage>
        <taxon>Bacteria</taxon>
        <taxon>Bacillati</taxon>
        <taxon>Bacillota</taxon>
        <taxon>Clostridia</taxon>
        <taxon>Eubacteriales</taxon>
        <taxon>Desulfitobacteriaceae</taxon>
        <taxon>Desulfitobacterium</taxon>
    </lineage>
</organism>
<sequence>MKTKNFRDMTDEELLKEIDGFKTELFNLRFQLATGQLDNPARIREVRKGIARGKTILRERELKINRA</sequence>
<name>RL29_DESHD</name>
<reference key="1">
    <citation type="journal article" date="2012" name="BMC Microbiol.">
        <title>Genome sequence of Desulfitobacterium hafniense DCB-2, a Gram-positive anaerobe capable of dehalogenation and metal reduction.</title>
        <authorList>
            <person name="Kim S.H."/>
            <person name="Harzman C."/>
            <person name="Davis J.K."/>
            <person name="Hutcheson R."/>
            <person name="Broderick J.B."/>
            <person name="Marsh T.L."/>
            <person name="Tiedje J.M."/>
        </authorList>
    </citation>
    <scope>NUCLEOTIDE SEQUENCE [LARGE SCALE GENOMIC DNA]</scope>
    <source>
        <strain>DSM 10664 / DCB-2</strain>
    </source>
</reference>
<keyword id="KW-0687">Ribonucleoprotein</keyword>
<keyword id="KW-0689">Ribosomal protein</keyword>